<comment type="similarity">
    <text evidence="1">Belongs to the universal ribosomal protein uS9 family.</text>
</comment>
<accession>Q3Z949</accession>
<keyword id="KW-0687">Ribonucleoprotein</keyword>
<keyword id="KW-0689">Ribosomal protein</keyword>
<name>RS9_DEHM1</name>
<sequence length="132" mass="14494">MVEKNTYFIGVGRRKTAVATVKLTSGNGVIVIDGKPIEERFTRVQERNVILNPMMVTDTMGKYNAVIKVLGGGVAGQSGAIAHGIARALEKSDDKLRATLKSNGLLTRDDRTKERKKPGLKRARKAPQYTKR</sequence>
<feature type="chain" id="PRO_1000081813" description="Small ribosomal subunit protein uS9">
    <location>
        <begin position="1"/>
        <end position="132"/>
    </location>
</feature>
<feature type="region of interest" description="Disordered" evidence="2">
    <location>
        <begin position="100"/>
        <end position="132"/>
    </location>
</feature>
<feature type="compositionally biased region" description="Basic residues" evidence="2">
    <location>
        <begin position="114"/>
        <end position="132"/>
    </location>
</feature>
<dbReference type="EMBL" id="CP000027">
    <property type="protein sequence ID" value="AAW40245.1"/>
    <property type="molecule type" value="Genomic_DNA"/>
</dbReference>
<dbReference type="RefSeq" id="WP_010936283.1">
    <property type="nucleotide sequence ID" value="NC_002936.3"/>
</dbReference>
<dbReference type="SMR" id="Q3Z949"/>
<dbReference type="FunCoup" id="Q3Z949">
    <property type="interactions" value="381"/>
</dbReference>
<dbReference type="STRING" id="243164.DET0506"/>
<dbReference type="GeneID" id="3230209"/>
<dbReference type="KEGG" id="det:DET0506"/>
<dbReference type="eggNOG" id="COG0103">
    <property type="taxonomic scope" value="Bacteria"/>
</dbReference>
<dbReference type="HOGENOM" id="CLU_046483_2_1_0"/>
<dbReference type="InParanoid" id="Q3Z949"/>
<dbReference type="Proteomes" id="UP000008289">
    <property type="component" value="Chromosome"/>
</dbReference>
<dbReference type="GO" id="GO:0022627">
    <property type="term" value="C:cytosolic small ribosomal subunit"/>
    <property type="evidence" value="ECO:0007669"/>
    <property type="project" value="TreeGrafter"/>
</dbReference>
<dbReference type="GO" id="GO:0003723">
    <property type="term" value="F:RNA binding"/>
    <property type="evidence" value="ECO:0007669"/>
    <property type="project" value="TreeGrafter"/>
</dbReference>
<dbReference type="GO" id="GO:0003735">
    <property type="term" value="F:structural constituent of ribosome"/>
    <property type="evidence" value="ECO:0007669"/>
    <property type="project" value="InterPro"/>
</dbReference>
<dbReference type="GO" id="GO:0006412">
    <property type="term" value="P:translation"/>
    <property type="evidence" value="ECO:0007669"/>
    <property type="project" value="UniProtKB-UniRule"/>
</dbReference>
<dbReference type="FunFam" id="3.30.230.10:FF:000001">
    <property type="entry name" value="30S ribosomal protein S9"/>
    <property type="match status" value="1"/>
</dbReference>
<dbReference type="Gene3D" id="3.30.230.10">
    <property type="match status" value="1"/>
</dbReference>
<dbReference type="HAMAP" id="MF_00532_B">
    <property type="entry name" value="Ribosomal_uS9_B"/>
    <property type="match status" value="1"/>
</dbReference>
<dbReference type="InterPro" id="IPR020568">
    <property type="entry name" value="Ribosomal_Su5_D2-typ_SF"/>
</dbReference>
<dbReference type="InterPro" id="IPR000754">
    <property type="entry name" value="Ribosomal_uS9"/>
</dbReference>
<dbReference type="InterPro" id="IPR023035">
    <property type="entry name" value="Ribosomal_uS9_bac/plastid"/>
</dbReference>
<dbReference type="InterPro" id="IPR020574">
    <property type="entry name" value="Ribosomal_uS9_CS"/>
</dbReference>
<dbReference type="InterPro" id="IPR014721">
    <property type="entry name" value="Ribsml_uS5_D2-typ_fold_subgr"/>
</dbReference>
<dbReference type="NCBIfam" id="NF001099">
    <property type="entry name" value="PRK00132.1"/>
    <property type="match status" value="1"/>
</dbReference>
<dbReference type="PANTHER" id="PTHR21569">
    <property type="entry name" value="RIBOSOMAL PROTEIN S9"/>
    <property type="match status" value="1"/>
</dbReference>
<dbReference type="PANTHER" id="PTHR21569:SF1">
    <property type="entry name" value="SMALL RIBOSOMAL SUBUNIT PROTEIN US9M"/>
    <property type="match status" value="1"/>
</dbReference>
<dbReference type="Pfam" id="PF00380">
    <property type="entry name" value="Ribosomal_S9"/>
    <property type="match status" value="1"/>
</dbReference>
<dbReference type="SUPFAM" id="SSF54211">
    <property type="entry name" value="Ribosomal protein S5 domain 2-like"/>
    <property type="match status" value="1"/>
</dbReference>
<dbReference type="PROSITE" id="PS00360">
    <property type="entry name" value="RIBOSOMAL_S9"/>
    <property type="match status" value="1"/>
</dbReference>
<proteinExistence type="inferred from homology"/>
<evidence type="ECO:0000255" key="1">
    <source>
        <dbReference type="HAMAP-Rule" id="MF_00532"/>
    </source>
</evidence>
<evidence type="ECO:0000256" key="2">
    <source>
        <dbReference type="SAM" id="MobiDB-lite"/>
    </source>
</evidence>
<evidence type="ECO:0000305" key="3"/>
<organism>
    <name type="scientific">Dehalococcoides mccartyi (strain ATCC BAA-2266 / KCTC 15142 / 195)</name>
    <name type="common">Dehalococcoides ethenogenes (strain 195)</name>
    <dbReference type="NCBI Taxonomy" id="243164"/>
    <lineage>
        <taxon>Bacteria</taxon>
        <taxon>Bacillati</taxon>
        <taxon>Chloroflexota</taxon>
        <taxon>Dehalococcoidia</taxon>
        <taxon>Dehalococcoidales</taxon>
        <taxon>Dehalococcoidaceae</taxon>
        <taxon>Dehalococcoides</taxon>
    </lineage>
</organism>
<protein>
    <recommendedName>
        <fullName evidence="1">Small ribosomal subunit protein uS9</fullName>
    </recommendedName>
    <alternativeName>
        <fullName evidence="3">30S ribosomal protein S9</fullName>
    </alternativeName>
</protein>
<gene>
    <name evidence="1" type="primary">rpsI</name>
    <name type="ordered locus">DET0506</name>
</gene>
<reference key="1">
    <citation type="journal article" date="2005" name="Science">
        <title>Genome sequence of the PCE-dechlorinating bacterium Dehalococcoides ethenogenes.</title>
        <authorList>
            <person name="Seshadri R."/>
            <person name="Adrian L."/>
            <person name="Fouts D.E."/>
            <person name="Eisen J.A."/>
            <person name="Phillippy A.M."/>
            <person name="Methe B.A."/>
            <person name="Ward N.L."/>
            <person name="Nelson W.C."/>
            <person name="DeBoy R.T."/>
            <person name="Khouri H.M."/>
            <person name="Kolonay J.F."/>
            <person name="Dodson R.J."/>
            <person name="Daugherty S.C."/>
            <person name="Brinkac L.M."/>
            <person name="Sullivan S.A."/>
            <person name="Madupu R."/>
            <person name="Nelson K.E."/>
            <person name="Kang K.H."/>
            <person name="Impraim M."/>
            <person name="Tran K."/>
            <person name="Robinson J.M."/>
            <person name="Forberger H.A."/>
            <person name="Fraser C.M."/>
            <person name="Zinder S.H."/>
            <person name="Heidelberg J.F."/>
        </authorList>
    </citation>
    <scope>NUCLEOTIDE SEQUENCE [LARGE SCALE GENOMIC DNA]</scope>
    <source>
        <strain>ATCC BAA-2266 / KCTC 15142 / 195</strain>
    </source>
</reference>